<sequence>MCHTSHSSGCPMACPGSPCCVPSTCYPPEGYGTSCCCSAPCVALLCRPLCGVSTCCQPACCVPSPCQVACCVPVSCKPVLCVASFCPTSGCCQPFCPTLVYRPVTWSTPTGC</sequence>
<name>KR124_HUMAN</name>
<protein>
    <recommendedName>
        <fullName>Keratin-associated protein 12-4</fullName>
    </recommendedName>
    <alternativeName>
        <fullName>High sulfur keratin-associated protein 12.4</fullName>
    </alternativeName>
    <alternativeName>
        <fullName>Keratin-associated protein 12.4</fullName>
    </alternativeName>
</protein>
<reference key="1">
    <citation type="journal article" date="2004" name="Genomics">
        <title>A cluster of 21 keratin-associated protein genes within introns of another gene on human chromosome 21q22.3.</title>
        <authorList>
            <person name="Shibuya K."/>
            <person name="Obayashi I."/>
            <person name="Asakawa S."/>
            <person name="Minoshima S."/>
            <person name="Kudoh J."/>
            <person name="Shimizu N."/>
        </authorList>
    </citation>
    <scope>NUCLEOTIDE SEQUENCE [MRNA]</scope>
    <scope>TISSUE SPECIFICITY</scope>
    <source>
        <tissue>Hair root</tissue>
    </source>
</reference>
<reference key="2">
    <citation type="journal article" date="2000" name="Nature">
        <title>The DNA sequence of human chromosome 21.</title>
        <authorList>
            <person name="Hattori M."/>
            <person name="Fujiyama A."/>
            <person name="Taylor T.D."/>
            <person name="Watanabe H."/>
            <person name="Yada T."/>
            <person name="Park H.-S."/>
            <person name="Toyoda A."/>
            <person name="Ishii K."/>
            <person name="Totoki Y."/>
            <person name="Choi D.-K."/>
            <person name="Groner Y."/>
            <person name="Soeda E."/>
            <person name="Ohki M."/>
            <person name="Takagi T."/>
            <person name="Sakaki Y."/>
            <person name="Taudien S."/>
            <person name="Blechschmidt K."/>
            <person name="Polley A."/>
            <person name="Menzel U."/>
            <person name="Delabar J."/>
            <person name="Kumpf K."/>
            <person name="Lehmann R."/>
            <person name="Patterson D."/>
            <person name="Reichwald K."/>
            <person name="Rump A."/>
            <person name="Schillhabel M."/>
            <person name="Schudy A."/>
            <person name="Zimmermann W."/>
            <person name="Rosenthal A."/>
            <person name="Kudoh J."/>
            <person name="Shibuya K."/>
            <person name="Kawasaki K."/>
            <person name="Asakawa S."/>
            <person name="Shintani A."/>
            <person name="Sasaki T."/>
            <person name="Nagamine K."/>
            <person name="Mitsuyama S."/>
            <person name="Antonarakis S.E."/>
            <person name="Minoshima S."/>
            <person name="Shimizu N."/>
            <person name="Nordsiek G."/>
            <person name="Hornischer K."/>
            <person name="Brandt P."/>
            <person name="Scharfe M."/>
            <person name="Schoen O."/>
            <person name="Desario A."/>
            <person name="Reichelt J."/>
            <person name="Kauer G."/>
            <person name="Bloecker H."/>
            <person name="Ramser J."/>
            <person name="Beck A."/>
            <person name="Klages S."/>
            <person name="Hennig S."/>
            <person name="Riesselmann L."/>
            <person name="Dagand E."/>
            <person name="Wehrmeyer S."/>
            <person name="Borzym K."/>
            <person name="Gardiner K."/>
            <person name="Nizetic D."/>
            <person name="Francis F."/>
            <person name="Lehrach H."/>
            <person name="Reinhardt R."/>
            <person name="Yaspo M.-L."/>
        </authorList>
    </citation>
    <scope>NUCLEOTIDE SEQUENCE [LARGE SCALE GENOMIC DNA]</scope>
</reference>
<reference key="3">
    <citation type="journal article" date="2004" name="Genome Res.">
        <title>The status, quality, and expansion of the NIH full-length cDNA project: the Mammalian Gene Collection (MGC).</title>
        <authorList>
            <consortium name="The MGC Project Team"/>
        </authorList>
    </citation>
    <scope>NUCLEOTIDE SEQUENCE [LARGE SCALE MRNA]</scope>
</reference>
<reference key="4">
    <citation type="journal article" date="2004" name="J. Invest. Dermatol.">
        <title>Hair keratin associated proteins: characterization of a second high sulfur KAP gene domain on human chromosome 21.</title>
        <authorList>
            <person name="Rogers M.A."/>
            <person name="Langbein L."/>
            <person name="Winter H."/>
            <person name="Beckmann I."/>
            <person name="Praetzel S."/>
            <person name="Schweizer J."/>
        </authorList>
    </citation>
    <scope>TISSUE SPECIFICITY</scope>
</reference>
<dbReference type="EMBL" id="AB076360">
    <property type="protein sequence ID" value="BAD01547.1"/>
    <property type="molecule type" value="mRNA"/>
</dbReference>
<dbReference type="EMBL" id="AL773602">
    <property type="status" value="NOT_ANNOTATED_CDS"/>
    <property type="molecule type" value="Genomic_DNA"/>
</dbReference>
<dbReference type="EMBL" id="BC125198">
    <property type="protein sequence ID" value="AAI25199.1"/>
    <property type="molecule type" value="mRNA"/>
</dbReference>
<dbReference type="CCDS" id="CCDS42963.1"/>
<dbReference type="RefSeq" id="NP_941971.1">
    <property type="nucleotide sequence ID" value="NM_198698.1"/>
</dbReference>
<dbReference type="BioGRID" id="132135">
    <property type="interactions" value="52"/>
</dbReference>
<dbReference type="FunCoup" id="P60329">
    <property type="interactions" value="37"/>
</dbReference>
<dbReference type="IntAct" id="P60329">
    <property type="interactions" value="46"/>
</dbReference>
<dbReference type="STRING" id="9606.ENSP00000375476"/>
<dbReference type="BioMuta" id="KRTAP12-4"/>
<dbReference type="DMDM" id="41688566"/>
<dbReference type="PaxDb" id="9606-ENSP00000375476"/>
<dbReference type="DNASU" id="386684"/>
<dbReference type="Ensembl" id="ENST00000391618.1">
    <property type="protein sequence ID" value="ENSP00000375476.1"/>
    <property type="gene ID" value="ENSG00000212933.1"/>
</dbReference>
<dbReference type="GeneID" id="386684"/>
<dbReference type="KEGG" id="hsa:386684"/>
<dbReference type="MANE-Select" id="ENST00000391618.1">
    <property type="protein sequence ID" value="ENSP00000375476.1"/>
    <property type="RefSeq nucleotide sequence ID" value="NM_198698.1"/>
    <property type="RefSeq protein sequence ID" value="NP_941971.1"/>
</dbReference>
<dbReference type="UCSC" id="uc002zfs.1">
    <property type="organism name" value="human"/>
</dbReference>
<dbReference type="AGR" id="HGNC:20532"/>
<dbReference type="CTD" id="386684"/>
<dbReference type="GeneCards" id="KRTAP12-4"/>
<dbReference type="HGNC" id="HGNC:20532">
    <property type="gene designation" value="KRTAP12-4"/>
</dbReference>
<dbReference type="HPA" id="ENSG00000212933">
    <property type="expression patterns" value="Not detected"/>
</dbReference>
<dbReference type="neXtProt" id="NX_P60329"/>
<dbReference type="PharmGKB" id="PA134932676"/>
<dbReference type="VEuPathDB" id="HostDB:ENSG00000212933"/>
<dbReference type="eggNOG" id="KOG4726">
    <property type="taxonomic scope" value="Eukaryota"/>
</dbReference>
<dbReference type="GeneTree" id="ENSGT00960000187213"/>
<dbReference type="HOGENOM" id="CLU_138013_0_0_1"/>
<dbReference type="InParanoid" id="P60329"/>
<dbReference type="OMA" id="CPMACPG"/>
<dbReference type="OrthoDB" id="9633948at2759"/>
<dbReference type="PAN-GO" id="P60329">
    <property type="GO annotations" value="0 GO annotations based on evolutionary models"/>
</dbReference>
<dbReference type="PhylomeDB" id="P60329"/>
<dbReference type="TreeFam" id="TF339135"/>
<dbReference type="PathwayCommons" id="P60329"/>
<dbReference type="Reactome" id="R-HSA-6805567">
    <property type="pathway name" value="Keratinization"/>
</dbReference>
<dbReference type="SignaLink" id="P60329"/>
<dbReference type="BioGRID-ORCS" id="386684">
    <property type="hits" value="117 hits in 1127 CRISPR screens"/>
</dbReference>
<dbReference type="GenomeRNAi" id="386684"/>
<dbReference type="Pharos" id="P60329">
    <property type="development level" value="Tdark"/>
</dbReference>
<dbReference type="PRO" id="PR:P60329"/>
<dbReference type="Proteomes" id="UP000005640">
    <property type="component" value="Chromosome 21"/>
</dbReference>
<dbReference type="RNAct" id="P60329">
    <property type="molecule type" value="protein"/>
</dbReference>
<dbReference type="Bgee" id="ENSG00000212933">
    <property type="expression patterns" value="Expressed in blood and 4 other cell types or tissues"/>
</dbReference>
<dbReference type="GO" id="GO:0005829">
    <property type="term" value="C:cytosol"/>
    <property type="evidence" value="ECO:0000304"/>
    <property type="project" value="Reactome"/>
</dbReference>
<dbReference type="GO" id="GO:0005882">
    <property type="term" value="C:intermediate filament"/>
    <property type="evidence" value="ECO:0007669"/>
    <property type="project" value="UniProtKB-KW"/>
</dbReference>
<feature type="chain" id="PRO_0000185199" description="Keratin-associated protein 12-4">
    <location>
        <begin position="1"/>
        <end position="112"/>
    </location>
</feature>
<feature type="repeat" description="1">
    <location>
        <begin position="10"/>
        <end position="14"/>
    </location>
</feature>
<feature type="repeat" description="2">
    <location>
        <begin position="20"/>
        <end position="24"/>
    </location>
</feature>
<feature type="repeat" description="3">
    <location>
        <begin position="25"/>
        <end position="29"/>
    </location>
</feature>
<feature type="repeat" description="4">
    <location>
        <begin position="35"/>
        <end position="39"/>
    </location>
</feature>
<feature type="repeat" description="5">
    <location>
        <begin position="41"/>
        <end position="45"/>
    </location>
</feature>
<feature type="repeat" description="6">
    <location>
        <begin position="46"/>
        <end position="50"/>
    </location>
</feature>
<feature type="repeat" description="7">
    <location>
        <begin position="56"/>
        <end position="60"/>
    </location>
</feature>
<feature type="repeat" description="8">
    <location>
        <begin position="61"/>
        <end position="65"/>
    </location>
</feature>
<feature type="repeat" description="9">
    <location>
        <begin position="66"/>
        <end position="70"/>
    </location>
</feature>
<feature type="repeat" description="10">
    <location>
        <begin position="71"/>
        <end position="75"/>
    </location>
</feature>
<feature type="repeat" description="11">
    <location>
        <begin position="76"/>
        <end position="80"/>
    </location>
</feature>
<feature type="repeat" description="12">
    <location>
        <begin position="81"/>
        <end position="85"/>
    </location>
</feature>
<feature type="repeat" description="13">
    <location>
        <begin position="86"/>
        <end position="90"/>
    </location>
</feature>
<feature type="repeat" description="14">
    <location>
        <begin position="91"/>
        <end position="95"/>
    </location>
</feature>
<feature type="repeat" description="15">
    <location>
        <begin position="96"/>
        <end position="100"/>
    </location>
</feature>
<feature type="region of interest" description="15 X 5 AA approximate repeats">
    <location>
        <begin position="10"/>
        <end position="100"/>
    </location>
</feature>
<evidence type="ECO:0000269" key="1">
    <source>
    </source>
</evidence>
<evidence type="ECO:0000269" key="2">
    <source>
    </source>
</evidence>
<evidence type="ECO:0000305" key="3"/>
<keyword id="KW-0416">Keratin</keyword>
<keyword id="KW-1185">Reference proteome</keyword>
<keyword id="KW-0677">Repeat</keyword>
<proteinExistence type="evidence at protein level"/>
<organism>
    <name type="scientific">Homo sapiens</name>
    <name type="common">Human</name>
    <dbReference type="NCBI Taxonomy" id="9606"/>
    <lineage>
        <taxon>Eukaryota</taxon>
        <taxon>Metazoa</taxon>
        <taxon>Chordata</taxon>
        <taxon>Craniata</taxon>
        <taxon>Vertebrata</taxon>
        <taxon>Euteleostomi</taxon>
        <taxon>Mammalia</taxon>
        <taxon>Eutheria</taxon>
        <taxon>Euarchontoglires</taxon>
        <taxon>Primates</taxon>
        <taxon>Haplorrhini</taxon>
        <taxon>Catarrhini</taxon>
        <taxon>Hominidae</taxon>
        <taxon>Homo</taxon>
    </lineage>
</organism>
<comment type="function">
    <text>In the hair cortex, hair keratin intermediate filaments are embedded in an interfilamentous matrix, consisting of hair keratin-associated proteins (KRTAP), which are essential for the formation of a rigid and resistant hair shaft through their extensive disulfide bond cross-linking with abundant cysteine residues of hair keratins. The matrix proteins include the high-sulfur and high-glycine-tyrosine keratins.</text>
</comment>
<comment type="subunit">
    <text>Interacts with hair keratins.</text>
</comment>
<comment type="interaction">
    <interactant intactId="EBI-10176396">
        <id>P60329</id>
    </interactant>
    <interactant intactId="EBI-745213">
        <id>P29972</id>
        <label>AQP1</label>
    </interactant>
    <organismsDiffer>false</organismsDiffer>
    <experiments>3</experiments>
</comment>
<comment type="interaction">
    <interactant intactId="EBI-10176396">
        <id>P60329</id>
    </interactant>
    <interactant intactId="EBI-930964">
        <id>P54253</id>
        <label>ATXN1</label>
    </interactant>
    <organismsDiffer>false</organismsDiffer>
    <experiments>3</experiments>
</comment>
<comment type="interaction">
    <interactant intactId="EBI-10176396">
        <id>P60329</id>
    </interactant>
    <interactant intactId="EBI-12053753">
        <id>Q8WWM7-9</id>
        <label>ATXN2L</label>
    </interactant>
    <organismsDiffer>false</organismsDiffer>
    <experiments>3</experiments>
</comment>
<comment type="interaction">
    <interactant intactId="EBI-10176396">
        <id>P60329</id>
    </interactant>
    <interactant intactId="EBI-12820943">
        <id>O95992</id>
        <label>CH25H</label>
    </interactant>
    <organismsDiffer>false</organismsDiffer>
    <experiments>3</experiments>
</comment>
<comment type="interaction">
    <interactant intactId="EBI-10176396">
        <id>P60329</id>
    </interactant>
    <interactant intactId="EBI-3867333">
        <id>A8MQ03</id>
        <label>CYSRT1</label>
    </interactant>
    <organismsDiffer>false</organismsDiffer>
    <experiments>3</experiments>
</comment>
<comment type="interaction">
    <interactant intactId="EBI-10176396">
        <id>P60329</id>
    </interactant>
    <interactant intactId="EBI-719816">
        <id>Q9NWN3</id>
        <label>FBXO34</label>
    </interactant>
    <organismsDiffer>false</organismsDiffer>
    <experiments>4</experiments>
</comment>
<comment type="interaction">
    <interactant intactId="EBI-10176396">
        <id>P60329</id>
    </interactant>
    <interactant intactId="EBI-10277297">
        <id>Q8WW32</id>
        <label>HMGB4</label>
    </interactant>
    <organismsDiffer>false</organismsDiffer>
    <experiments>3</experiments>
</comment>
<comment type="interaction">
    <interactant intactId="EBI-10176396">
        <id>P60329</id>
    </interactant>
    <interactant intactId="EBI-740785">
        <id>P49639</id>
        <label>HOXA1</label>
    </interactant>
    <organismsDiffer>false</organismsDiffer>
    <experiments>10</experiments>
</comment>
<comment type="interaction">
    <interactant intactId="EBI-10176396">
        <id>P60329</id>
    </interactant>
    <interactant intactId="EBI-10220600">
        <id>Q8NA54</id>
        <label>IQUB</label>
    </interactant>
    <organismsDiffer>false</organismsDiffer>
    <experiments>6</experiments>
</comment>
<comment type="interaction">
    <interactant intactId="EBI-10176396">
        <id>P60329</id>
    </interactant>
    <interactant intactId="EBI-1052037">
        <id>Q8IUC1</id>
        <label>KRTAP11-1</label>
    </interactant>
    <organismsDiffer>false</organismsDiffer>
    <experiments>4</experiments>
</comment>
<comment type="interaction">
    <interactant intactId="EBI-10176396">
        <id>P60329</id>
    </interactant>
    <interactant intactId="EBI-10176379">
        <id>P59991</id>
        <label>KRTAP12-2</label>
    </interactant>
    <organismsDiffer>false</organismsDiffer>
    <experiments>3</experiments>
</comment>
<comment type="interaction">
    <interactant intactId="EBI-10176396">
        <id>P60329</id>
    </interactant>
    <interactant intactId="EBI-12196745">
        <id>Q3LHN2</id>
        <label>KRTAP19-2</label>
    </interactant>
    <organismsDiffer>false</organismsDiffer>
    <experiments>3</experiments>
</comment>
<comment type="interaction">
    <interactant intactId="EBI-10176396">
        <id>P60329</id>
    </interactant>
    <interactant intactId="EBI-1048945">
        <id>Q3LI72</id>
        <label>KRTAP19-5</label>
    </interactant>
    <organismsDiffer>false</organismsDiffer>
    <experiments>3</experiments>
</comment>
<comment type="interaction">
    <interactant intactId="EBI-10176396">
        <id>P60329</id>
    </interactant>
    <interactant intactId="EBI-12805508">
        <id>Q3LI70</id>
        <label>KRTAP19-6</label>
    </interactant>
    <organismsDiffer>false</organismsDiffer>
    <experiments>3</experiments>
</comment>
<comment type="interaction">
    <interactant intactId="EBI-10176396">
        <id>P60329</id>
    </interactant>
    <interactant intactId="EBI-10241353">
        <id>Q3SYF9</id>
        <label>KRTAP19-7</label>
    </interactant>
    <organismsDiffer>false</organismsDiffer>
    <experiments>3</experiments>
</comment>
<comment type="interaction">
    <interactant intactId="EBI-10176396">
        <id>P60329</id>
    </interactant>
    <interactant intactId="EBI-14065470">
        <id>Q9BYR9</id>
        <label>KRTAP2-4</label>
    </interactant>
    <organismsDiffer>false</organismsDiffer>
    <experiments>3</experiments>
</comment>
<comment type="interaction">
    <interactant intactId="EBI-10176396">
        <id>P60329</id>
    </interactant>
    <interactant intactId="EBI-3957694">
        <id>Q9BYR6</id>
        <label>KRTAP3-3</label>
    </interactant>
    <organismsDiffer>false</organismsDiffer>
    <experiments>3</experiments>
</comment>
<comment type="interaction">
    <interactant intactId="EBI-10176396">
        <id>P60329</id>
    </interactant>
    <interactant intactId="EBI-11962084">
        <id>Q3LI66</id>
        <label>KRTAP6-2</label>
    </interactant>
    <organismsDiffer>false</organismsDiffer>
    <experiments>3</experiments>
</comment>
<comment type="interaction">
    <interactant intactId="EBI-10176396">
        <id>P60329</id>
    </interactant>
    <interactant intactId="EBI-10261141">
        <id>Q8IUC2</id>
        <label>KRTAP8-1</label>
    </interactant>
    <organismsDiffer>false</organismsDiffer>
    <experiments>3</experiments>
</comment>
<comment type="interaction">
    <interactant intactId="EBI-10176396">
        <id>P60329</id>
    </interactant>
    <interactant intactId="EBI-9088686">
        <id>Q14847-2</id>
        <label>LASP1</label>
    </interactant>
    <organismsDiffer>false</organismsDiffer>
    <experiments>3</experiments>
</comment>
<comment type="interaction">
    <interactant intactId="EBI-10176396">
        <id>P60329</id>
    </interactant>
    <interactant intactId="EBI-11962058">
        <id>Q5T7P2</id>
        <label>LCE1A</label>
    </interactant>
    <organismsDiffer>false</organismsDiffer>
    <experiments>3</experiments>
</comment>
<comment type="interaction">
    <interactant intactId="EBI-10176396">
        <id>P60329</id>
    </interactant>
    <interactant intactId="EBI-12224199">
        <id>Q5T751</id>
        <label>LCE1C</label>
    </interactant>
    <organismsDiffer>false</organismsDiffer>
    <experiments>3</experiments>
</comment>
<comment type="interaction">
    <interactant intactId="EBI-10176396">
        <id>P60329</id>
    </interactant>
    <interactant intactId="EBI-11955335">
        <id>Q5T753</id>
        <label>LCE1E</label>
    </interactant>
    <organismsDiffer>false</organismsDiffer>
    <experiments>3</experiments>
</comment>
<comment type="interaction">
    <interactant intactId="EBI-10176396">
        <id>P60329</id>
    </interactant>
    <interactant intactId="EBI-11958008">
        <id>Q5T754</id>
        <label>LCE1F</label>
    </interactant>
    <organismsDiffer>false</organismsDiffer>
    <experiments>3</experiments>
</comment>
<comment type="interaction">
    <interactant intactId="EBI-10176396">
        <id>P60329</id>
    </interactant>
    <interactant intactId="EBI-10246607">
        <id>Q5TA79</id>
        <label>LCE2A</label>
    </interactant>
    <organismsDiffer>false</organismsDiffer>
    <experiments>3</experiments>
</comment>
<comment type="interaction">
    <interactant intactId="EBI-10176396">
        <id>P60329</id>
    </interactant>
    <interactant intactId="EBI-11973993">
        <id>Q5TA81</id>
        <label>LCE2C</label>
    </interactant>
    <organismsDiffer>false</organismsDiffer>
    <experiments>3</experiments>
</comment>
<comment type="interaction">
    <interactant intactId="EBI-10176396">
        <id>P60329</id>
    </interactant>
    <interactant intactId="EBI-9394625">
        <id>Q5TA76</id>
        <label>LCE3A</label>
    </interactant>
    <organismsDiffer>false</organismsDiffer>
    <experiments>3</experiments>
</comment>
<comment type="interaction">
    <interactant intactId="EBI-10176396">
        <id>P60329</id>
    </interactant>
    <interactant intactId="EBI-10246358">
        <id>Q5TA78</id>
        <label>LCE4A</label>
    </interactant>
    <organismsDiffer>false</organismsDiffer>
    <experiments>3</experiments>
</comment>
<comment type="interaction">
    <interactant intactId="EBI-10176396">
        <id>P60329</id>
    </interactant>
    <interactant intactId="EBI-11955689">
        <id>Q5TCM9</id>
        <label>LCE5A</label>
    </interactant>
    <organismsDiffer>false</organismsDiffer>
    <experiments>3</experiments>
</comment>
<comment type="interaction">
    <interactant intactId="EBI-10176396">
        <id>P60329</id>
    </interactant>
    <interactant intactId="EBI-748397">
        <id>P50222</id>
        <label>MEOX2</label>
    </interactant>
    <organismsDiffer>false</organismsDiffer>
    <experiments>3</experiments>
</comment>
<comment type="interaction">
    <interactant intactId="EBI-10176396">
        <id>P60329</id>
    </interactant>
    <interactant intactId="EBI-16439278">
        <id>Q6FHY5</id>
        <label>MEOX2</label>
    </interactant>
    <organismsDiffer>false</organismsDiffer>
    <experiments>3</experiments>
</comment>
<comment type="interaction">
    <interactant intactId="EBI-10176396">
        <id>P60329</id>
    </interactant>
    <interactant intactId="EBI-945833">
        <id>Q7Z3S9</id>
        <label>NOTCH2NLA</label>
    </interactant>
    <organismsDiffer>false</organismsDiffer>
    <experiments>3</experiments>
</comment>
<comment type="interaction">
    <interactant intactId="EBI-10176396">
        <id>P60329</id>
    </interactant>
    <interactant intactId="EBI-22310682">
        <id>P0DPK4</id>
        <label>NOTCH2NLC</label>
    </interactant>
    <organismsDiffer>false</organismsDiffer>
    <experiments>3</experiments>
</comment>
<comment type="interaction">
    <interactant intactId="EBI-10176396">
        <id>P60329</id>
    </interactant>
    <interactant intactId="EBI-13644623">
        <id>Q92570</id>
        <label>NR4A3</label>
    </interactant>
    <organismsDiffer>false</organismsDiffer>
    <experiments>3</experiments>
</comment>
<comment type="interaction">
    <interactant intactId="EBI-10176396">
        <id>P60329</id>
    </interactant>
    <interactant intactId="EBI-3914525">
        <id>Q13516</id>
        <label>OLIG2</label>
    </interactant>
    <organismsDiffer>false</organismsDiffer>
    <experiments>3</experiments>
</comment>
<comment type="interaction">
    <interactant intactId="EBI-10176396">
        <id>P60329</id>
    </interactant>
    <interactant intactId="EBI-740446">
        <id>P32242</id>
        <label>OTX1</label>
    </interactant>
    <organismsDiffer>false</organismsDiffer>
    <experiments>6</experiments>
</comment>
<comment type="interaction">
    <interactant intactId="EBI-10176396">
        <id>P60329</id>
    </interactant>
    <interactant intactId="EBI-10232538">
        <id>Q8WWB5</id>
        <label>PIH1D2</label>
    </interactant>
    <organismsDiffer>false</organismsDiffer>
    <experiments>6</experiments>
</comment>
<comment type="interaction">
    <interactant intactId="EBI-10176396">
        <id>P60329</id>
    </interactant>
    <interactant intactId="EBI-17236143">
        <id>Q12837</id>
        <label>POU4F2</label>
    </interactant>
    <organismsDiffer>false</organismsDiffer>
    <experiments>3</experiments>
</comment>
<comment type="interaction">
    <interactant intactId="EBI-10176396">
        <id>P60329</id>
    </interactant>
    <interactant intactId="EBI-740343">
        <id>Q93062-3</id>
        <label>RBPMS</label>
    </interactant>
    <organismsDiffer>false</organismsDiffer>
    <experiments>3</experiments>
</comment>
<comment type="interaction">
    <interactant intactId="EBI-10176396">
        <id>P60329</id>
    </interactant>
    <interactant intactId="EBI-948076">
        <id>Q9P2R6</id>
        <label>RERE</label>
    </interactant>
    <organismsDiffer>false</organismsDiffer>
    <experiments>3</experiments>
</comment>
<comment type="interaction">
    <interactant intactId="EBI-10176396">
        <id>P60329</id>
    </interactant>
    <interactant intactId="EBI-750494">
        <id>P49901</id>
        <label>SMCP</label>
    </interactant>
    <organismsDiffer>false</organismsDiffer>
    <experiments>3</experiments>
</comment>
<comment type="interaction">
    <interactant intactId="EBI-10176396">
        <id>P60329</id>
    </interactant>
    <interactant intactId="EBI-743976">
        <id>Q96LM6</id>
        <label>SPMIP9</label>
    </interactant>
    <organismsDiffer>false</organismsDiffer>
    <experiments>3</experiments>
</comment>
<comment type="interaction">
    <interactant intactId="EBI-10176396">
        <id>P60329</id>
    </interactant>
    <interactant intactId="EBI-10239812">
        <id>Q96M29</id>
        <label>TEKT5</label>
    </interactant>
    <organismsDiffer>false</organismsDiffer>
    <experiments>3</experiments>
</comment>
<comment type="interaction">
    <interactant intactId="EBI-10176396">
        <id>P60329</id>
    </interactant>
    <interactant intactId="EBI-358993">
        <id>Q15645</id>
        <label>TRIP13</label>
    </interactant>
    <organismsDiffer>false</organismsDiffer>
    <experiments>3</experiments>
</comment>
<comment type="interaction">
    <interactant intactId="EBI-10176396">
        <id>P60329</id>
    </interactant>
    <interactant intactId="EBI-10191303">
        <id>O95231</id>
        <label>VENTX</label>
    </interactant>
    <organismsDiffer>false</organismsDiffer>
    <experiments>4</experiments>
</comment>
<comment type="tissue specificity">
    <text evidence="1 2">Restricted to a narrow region of the hair fiber cuticle, lying approximately 20 cell layers above the apex of the dermal papilla of the hair root; not detected in any other tissues.</text>
</comment>
<comment type="similarity">
    <text evidence="3">Belongs to the KRTAP type 12 family.</text>
</comment>
<gene>
    <name type="primary">KRTAP12-4</name>
    <name type="synonym">KAP12.4</name>
    <name type="synonym">KRTAP12.4</name>
</gene>
<accession>P60329</accession>
<accession>Q08AF5</accession>